<protein>
    <recommendedName>
        <fullName evidence="1">DNA topoisomerase 3</fullName>
        <ecNumber evidence="1">5.6.2.1</ecNumber>
    </recommendedName>
    <alternativeName>
        <fullName evidence="1">DNA topoisomerase III</fullName>
    </alternativeName>
</protein>
<proteinExistence type="inferred from homology"/>
<comment type="function">
    <text evidence="1">Releases the supercoiling and torsional tension of DNA, which is introduced during the DNA replication and transcription, by transiently cleaving and rejoining one strand of the DNA duplex. Introduces a single-strand break via transesterification at a target site in duplex DNA. The scissile phosphodiester is attacked by the catalytic tyrosine of the enzyme, resulting in the formation of a DNA-(5'-phosphotyrosyl)-enzyme intermediate and the expulsion of a 3'-OH DNA strand. The free DNA strand then undergoes passage around the unbroken strand, thus removing DNA supercoils. Finally, in the religation step, the DNA 3'-OH attacks the covalent intermediate to expel the active-site tyrosine and restore the DNA phosphodiester backbone.</text>
</comment>
<comment type="catalytic activity">
    <reaction evidence="1">
        <text>ATP-independent breakage of single-stranded DNA, followed by passage and rejoining.</text>
        <dbReference type="EC" id="5.6.2.1"/>
    </reaction>
</comment>
<comment type="cofactor">
    <cofactor evidence="1">
        <name>Mg(2+)</name>
        <dbReference type="ChEBI" id="CHEBI:18420"/>
    </cofactor>
</comment>
<comment type="similarity">
    <text evidence="1 2">Belongs to the type IA topoisomerase family.</text>
</comment>
<evidence type="ECO:0000255" key="1">
    <source>
        <dbReference type="HAMAP-Rule" id="MF_00953"/>
    </source>
</evidence>
<evidence type="ECO:0000255" key="2">
    <source>
        <dbReference type="PROSITE-ProRule" id="PRU01383"/>
    </source>
</evidence>
<evidence type="ECO:0000256" key="3">
    <source>
        <dbReference type="SAM" id="MobiDB-lite"/>
    </source>
</evidence>
<dbReference type="EC" id="5.6.2.1" evidence="1"/>
<dbReference type="EMBL" id="CP000485">
    <property type="protein sequence ID" value="ABK83772.1"/>
    <property type="molecule type" value="Genomic_DNA"/>
</dbReference>
<dbReference type="RefSeq" id="WP_001140209.1">
    <property type="nucleotide sequence ID" value="NC_008600.1"/>
</dbReference>
<dbReference type="SMR" id="A0R979"/>
<dbReference type="GeneID" id="45020434"/>
<dbReference type="KEGG" id="btl:BALH_0373"/>
<dbReference type="HOGENOM" id="CLU_002929_5_2_9"/>
<dbReference type="GO" id="GO:0043597">
    <property type="term" value="C:cytoplasmic replication fork"/>
    <property type="evidence" value="ECO:0007669"/>
    <property type="project" value="TreeGrafter"/>
</dbReference>
<dbReference type="GO" id="GO:0003677">
    <property type="term" value="F:DNA binding"/>
    <property type="evidence" value="ECO:0007669"/>
    <property type="project" value="UniProtKB-KW"/>
</dbReference>
<dbReference type="GO" id="GO:0003917">
    <property type="term" value="F:DNA topoisomerase type I (single strand cut, ATP-independent) activity"/>
    <property type="evidence" value="ECO:0007669"/>
    <property type="project" value="UniProtKB-UniRule"/>
</dbReference>
<dbReference type="GO" id="GO:0000287">
    <property type="term" value="F:magnesium ion binding"/>
    <property type="evidence" value="ECO:0007669"/>
    <property type="project" value="UniProtKB-UniRule"/>
</dbReference>
<dbReference type="GO" id="GO:0006310">
    <property type="term" value="P:DNA recombination"/>
    <property type="evidence" value="ECO:0007669"/>
    <property type="project" value="TreeGrafter"/>
</dbReference>
<dbReference type="GO" id="GO:0006281">
    <property type="term" value="P:DNA repair"/>
    <property type="evidence" value="ECO:0007669"/>
    <property type="project" value="TreeGrafter"/>
</dbReference>
<dbReference type="GO" id="GO:0006265">
    <property type="term" value="P:DNA topological change"/>
    <property type="evidence" value="ECO:0007669"/>
    <property type="project" value="UniProtKB-UniRule"/>
</dbReference>
<dbReference type="CDD" id="cd00186">
    <property type="entry name" value="TOP1Ac"/>
    <property type="match status" value="1"/>
</dbReference>
<dbReference type="CDD" id="cd03362">
    <property type="entry name" value="TOPRIM_TopoIA_TopoIII"/>
    <property type="match status" value="1"/>
</dbReference>
<dbReference type="Gene3D" id="3.40.50.140">
    <property type="match status" value="1"/>
</dbReference>
<dbReference type="Gene3D" id="1.10.460.10">
    <property type="entry name" value="Topoisomerase I, domain 2"/>
    <property type="match status" value="1"/>
</dbReference>
<dbReference type="Gene3D" id="2.70.20.10">
    <property type="entry name" value="Topoisomerase I, domain 3"/>
    <property type="match status" value="1"/>
</dbReference>
<dbReference type="Gene3D" id="1.10.290.10">
    <property type="entry name" value="Topoisomerase I, domain 4"/>
    <property type="match status" value="1"/>
</dbReference>
<dbReference type="HAMAP" id="MF_00953">
    <property type="entry name" value="Topoisom_3_prok"/>
    <property type="match status" value="1"/>
</dbReference>
<dbReference type="InterPro" id="IPR000380">
    <property type="entry name" value="Topo_IA"/>
</dbReference>
<dbReference type="InterPro" id="IPR003601">
    <property type="entry name" value="Topo_IA_2"/>
</dbReference>
<dbReference type="InterPro" id="IPR023406">
    <property type="entry name" value="Topo_IA_AS"/>
</dbReference>
<dbReference type="InterPro" id="IPR013497">
    <property type="entry name" value="Topo_IA_cen"/>
</dbReference>
<dbReference type="InterPro" id="IPR013824">
    <property type="entry name" value="Topo_IA_cen_sub1"/>
</dbReference>
<dbReference type="InterPro" id="IPR013825">
    <property type="entry name" value="Topo_IA_cen_sub2"/>
</dbReference>
<dbReference type="InterPro" id="IPR013826">
    <property type="entry name" value="Topo_IA_cen_sub3"/>
</dbReference>
<dbReference type="InterPro" id="IPR023405">
    <property type="entry name" value="Topo_IA_core_domain"/>
</dbReference>
<dbReference type="InterPro" id="IPR003602">
    <property type="entry name" value="Topo_IA_DNA-bd_dom"/>
</dbReference>
<dbReference type="InterPro" id="IPR005738">
    <property type="entry name" value="TopoIII"/>
</dbReference>
<dbReference type="InterPro" id="IPR006171">
    <property type="entry name" value="TOPRIM_dom"/>
</dbReference>
<dbReference type="InterPro" id="IPR034144">
    <property type="entry name" value="TOPRIM_TopoIII"/>
</dbReference>
<dbReference type="NCBIfam" id="NF005829">
    <property type="entry name" value="PRK07726.1"/>
    <property type="match status" value="1"/>
</dbReference>
<dbReference type="NCBIfam" id="TIGR01056">
    <property type="entry name" value="topB"/>
    <property type="match status" value="1"/>
</dbReference>
<dbReference type="PANTHER" id="PTHR11390:SF21">
    <property type="entry name" value="DNA TOPOISOMERASE 3-ALPHA"/>
    <property type="match status" value="1"/>
</dbReference>
<dbReference type="PANTHER" id="PTHR11390">
    <property type="entry name" value="PROKARYOTIC DNA TOPOISOMERASE"/>
    <property type="match status" value="1"/>
</dbReference>
<dbReference type="Pfam" id="PF01131">
    <property type="entry name" value="Topoisom_bac"/>
    <property type="match status" value="1"/>
</dbReference>
<dbReference type="Pfam" id="PF01751">
    <property type="entry name" value="Toprim"/>
    <property type="match status" value="1"/>
</dbReference>
<dbReference type="PRINTS" id="PR00417">
    <property type="entry name" value="PRTPISMRASEI"/>
</dbReference>
<dbReference type="SMART" id="SM00437">
    <property type="entry name" value="TOP1Ac"/>
    <property type="match status" value="1"/>
</dbReference>
<dbReference type="SMART" id="SM00436">
    <property type="entry name" value="TOP1Bc"/>
    <property type="match status" value="1"/>
</dbReference>
<dbReference type="SMART" id="SM00493">
    <property type="entry name" value="TOPRIM"/>
    <property type="match status" value="1"/>
</dbReference>
<dbReference type="SUPFAM" id="SSF56712">
    <property type="entry name" value="Prokaryotic type I DNA topoisomerase"/>
    <property type="match status" value="1"/>
</dbReference>
<dbReference type="PROSITE" id="PS00396">
    <property type="entry name" value="TOPO_IA_1"/>
    <property type="match status" value="1"/>
</dbReference>
<dbReference type="PROSITE" id="PS52039">
    <property type="entry name" value="TOPO_IA_2"/>
    <property type="match status" value="1"/>
</dbReference>
<dbReference type="PROSITE" id="PS50880">
    <property type="entry name" value="TOPRIM"/>
    <property type="match status" value="1"/>
</dbReference>
<gene>
    <name evidence="1" type="primary">topB</name>
    <name type="ordered locus">BALH_0373</name>
</gene>
<reference key="1">
    <citation type="journal article" date="2007" name="J. Bacteriol.">
        <title>The complete genome sequence of Bacillus thuringiensis Al Hakam.</title>
        <authorList>
            <person name="Challacombe J.F."/>
            <person name="Altherr M.R."/>
            <person name="Xie G."/>
            <person name="Bhotika S.S."/>
            <person name="Brown N."/>
            <person name="Bruce D."/>
            <person name="Campbell C.S."/>
            <person name="Campbell M.L."/>
            <person name="Chen J."/>
            <person name="Chertkov O."/>
            <person name="Cleland C."/>
            <person name="Dimitrijevic M."/>
            <person name="Doggett N.A."/>
            <person name="Fawcett J.J."/>
            <person name="Glavina T."/>
            <person name="Goodwin L.A."/>
            <person name="Green L.D."/>
            <person name="Han C.S."/>
            <person name="Hill K.K."/>
            <person name="Hitchcock P."/>
            <person name="Jackson P.J."/>
            <person name="Keim P."/>
            <person name="Kewalramani A.R."/>
            <person name="Longmire J."/>
            <person name="Lucas S."/>
            <person name="Malfatti S."/>
            <person name="Martinez D."/>
            <person name="McMurry K."/>
            <person name="Meincke L.J."/>
            <person name="Misra M."/>
            <person name="Moseman B.L."/>
            <person name="Mundt M."/>
            <person name="Munk A.C."/>
            <person name="Okinaka R.T."/>
            <person name="Parson-Quintana B."/>
            <person name="Reilly L.P."/>
            <person name="Richardson P."/>
            <person name="Robinson D.L."/>
            <person name="Saunders E."/>
            <person name="Tapia R."/>
            <person name="Tesmer J.G."/>
            <person name="Thayer N."/>
            <person name="Thompson L.S."/>
            <person name="Tice H."/>
            <person name="Ticknor L.O."/>
            <person name="Wills P.L."/>
            <person name="Gilna P."/>
            <person name="Brettin T.S."/>
        </authorList>
    </citation>
    <scope>NUCLEOTIDE SEQUENCE [LARGE SCALE GENOMIC DNA]</scope>
    <source>
        <strain>Al Hakam</strain>
    </source>
</reference>
<feature type="chain" id="PRO_0000286358" description="DNA topoisomerase 3">
    <location>
        <begin position="1"/>
        <end position="729"/>
    </location>
</feature>
<feature type="domain" description="Toprim" evidence="1">
    <location>
        <begin position="3"/>
        <end position="136"/>
    </location>
</feature>
<feature type="domain" description="Topo IA-type catalytic" evidence="2">
    <location>
        <begin position="153"/>
        <end position="594"/>
    </location>
</feature>
<feature type="region of interest" description="Interaction with DNA" evidence="1">
    <location>
        <begin position="187"/>
        <end position="192"/>
    </location>
</feature>
<feature type="region of interest" description="Disordered" evidence="3">
    <location>
        <begin position="686"/>
        <end position="718"/>
    </location>
</feature>
<feature type="compositionally biased region" description="Basic and acidic residues" evidence="3">
    <location>
        <begin position="686"/>
        <end position="713"/>
    </location>
</feature>
<feature type="active site" description="O-(5'-phospho-DNA)-tyrosine intermediate" evidence="2">
    <location>
        <position position="310"/>
    </location>
</feature>
<feature type="binding site" evidence="1">
    <location>
        <position position="9"/>
    </location>
    <ligand>
        <name>Mg(2+)</name>
        <dbReference type="ChEBI" id="CHEBI:18420"/>
        <note>catalytic</note>
    </ligand>
</feature>
<feature type="binding site" evidence="1">
    <location>
        <position position="105"/>
    </location>
    <ligand>
        <name>Mg(2+)</name>
        <dbReference type="ChEBI" id="CHEBI:18420"/>
        <note>catalytic</note>
    </ligand>
</feature>
<feature type="site" description="Interaction with DNA" evidence="1">
    <location>
        <position position="61"/>
    </location>
</feature>
<feature type="site" description="Interaction with DNA" evidence="1">
    <location>
        <position position="168"/>
    </location>
</feature>
<feature type="site" description="Interaction with DNA" evidence="1">
    <location>
        <position position="176"/>
    </location>
</feature>
<feature type="site" description="Interaction with DNA" evidence="1">
    <location>
        <position position="312"/>
    </location>
</feature>
<accession>A0R979</accession>
<organism>
    <name type="scientific">Bacillus thuringiensis (strain Al Hakam)</name>
    <dbReference type="NCBI Taxonomy" id="412694"/>
    <lineage>
        <taxon>Bacteria</taxon>
        <taxon>Bacillati</taxon>
        <taxon>Bacillota</taxon>
        <taxon>Bacilli</taxon>
        <taxon>Bacillales</taxon>
        <taxon>Bacillaceae</taxon>
        <taxon>Bacillus</taxon>
        <taxon>Bacillus cereus group</taxon>
    </lineage>
</organism>
<sequence>MAKSVVIAEKPSVARDIARVLKCDKKGNGYLEGSKYIVTWALGHLVTLADPESYDVKYKKWNLEDLPMLPERLKLTVIKQTGKQFNAVKSQLLRKDVNEIIVATDAGREGELVARWIIDKVRINKPIKRLWISSVTDKAIKDGFANLKPGKAYDNLYASAVARSEADWYIGLNATRALTTRFNAQLNCGRVQTPTVAMIANREDEIKNFKAQTYYGIEAQTTNQLKLTWQDANGNSRSFNKEKIDGIVKGLDKHNATVLEIDKKQKKSFSPGLYDLTELQRDANKKFGYSAKETLNIMQKLYEQHKVLTYPRTDSRYISSDIVGTLPERLKACGVGEYRPLAHKVLQKPIKANKSFVDDSKVSDHHAIIPTEGYVNFSAFTDKERKIYDLVVKRFLAVLFPAFEYEQLTLRTKVGNETFIARGKTILHAGWKEVYENRFEDDDVTDDVKEQLLPRIEKGDTLTVKLIMQTSGQTKAPARFNEATLLSAMENPTKYMDTQNKQLADTLKSTGGLGTVATRADIIDKLFNSFLIEKRGKDIHITSKGRQLLDLVPEELKSPTLTGEWEQKLEAIAKGKLKKEVFISEMKNYTKEIVSEIKSSDKKYKHDNISTKSCPDCGKPMLEVNGKKGKMLVCQDRECGHRKNVSRTTNARCPQCKKKLELRGEGAGQIFACKCGYREKLSTFQERRKKESGNKADKRDVQKYMKQQKKEEEPLNNPFAEALKKLKFD</sequence>
<keyword id="KW-0238">DNA-binding</keyword>
<keyword id="KW-0413">Isomerase</keyword>
<keyword id="KW-0460">Magnesium</keyword>
<keyword id="KW-0479">Metal-binding</keyword>
<keyword id="KW-0799">Topoisomerase</keyword>
<name>TOP3_BACAH</name>